<name>RPOA_SHEAM</name>
<sequence>MQGSVTEFLKPRLVDIEQVSPTRAKVTLEPLERGFGHTLGNALRRILLSSMPGCAVTEVEIDGVLHEYSSKEGVQEDILEILLNLKGLAVILEGKDEAMLTLSKSGAGPVTAADITHDGDVTIANPDHVICHLTGNHDISMRIRVERGRGYVPASARAQNEDDDRPIGRLLVDASFSPVARIAYNVEAARVEQRTDLDKLVIDMTTNGTIDPEEAIRRSATILAEQLDAFVELRDVSVPEQKEEKPEFDPILLRPVDDLELTVRSANCLKAEAIHYIGDLVQRTEVELLKTPNLGKKSLTEIKDVLASRGLSLGMRLENWPPASLADDL</sequence>
<dbReference type="EC" id="2.7.7.6" evidence="1"/>
<dbReference type="EMBL" id="CP000507">
    <property type="protein sequence ID" value="ABL98449.1"/>
    <property type="molecule type" value="Genomic_DNA"/>
</dbReference>
<dbReference type="RefSeq" id="WP_011758359.1">
    <property type="nucleotide sequence ID" value="NC_008700.1"/>
</dbReference>
<dbReference type="SMR" id="A1S243"/>
<dbReference type="STRING" id="326297.Sama_0238"/>
<dbReference type="KEGG" id="saz:Sama_0238"/>
<dbReference type="eggNOG" id="COG0202">
    <property type="taxonomic scope" value="Bacteria"/>
</dbReference>
<dbReference type="HOGENOM" id="CLU_053084_0_0_6"/>
<dbReference type="OrthoDB" id="9805706at2"/>
<dbReference type="Proteomes" id="UP000009175">
    <property type="component" value="Chromosome"/>
</dbReference>
<dbReference type="GO" id="GO:0005737">
    <property type="term" value="C:cytoplasm"/>
    <property type="evidence" value="ECO:0007669"/>
    <property type="project" value="UniProtKB-ARBA"/>
</dbReference>
<dbReference type="GO" id="GO:0000428">
    <property type="term" value="C:DNA-directed RNA polymerase complex"/>
    <property type="evidence" value="ECO:0007669"/>
    <property type="project" value="UniProtKB-KW"/>
</dbReference>
<dbReference type="GO" id="GO:0003677">
    <property type="term" value="F:DNA binding"/>
    <property type="evidence" value="ECO:0007669"/>
    <property type="project" value="UniProtKB-UniRule"/>
</dbReference>
<dbReference type="GO" id="GO:0003899">
    <property type="term" value="F:DNA-directed RNA polymerase activity"/>
    <property type="evidence" value="ECO:0007669"/>
    <property type="project" value="UniProtKB-UniRule"/>
</dbReference>
<dbReference type="GO" id="GO:0046983">
    <property type="term" value="F:protein dimerization activity"/>
    <property type="evidence" value="ECO:0007669"/>
    <property type="project" value="InterPro"/>
</dbReference>
<dbReference type="GO" id="GO:0006351">
    <property type="term" value="P:DNA-templated transcription"/>
    <property type="evidence" value="ECO:0007669"/>
    <property type="project" value="UniProtKB-UniRule"/>
</dbReference>
<dbReference type="CDD" id="cd06928">
    <property type="entry name" value="RNAP_alpha_NTD"/>
    <property type="match status" value="1"/>
</dbReference>
<dbReference type="FunFam" id="1.10.150.20:FF:000001">
    <property type="entry name" value="DNA-directed RNA polymerase subunit alpha"/>
    <property type="match status" value="1"/>
</dbReference>
<dbReference type="FunFam" id="2.170.120.12:FF:000001">
    <property type="entry name" value="DNA-directed RNA polymerase subunit alpha"/>
    <property type="match status" value="1"/>
</dbReference>
<dbReference type="Gene3D" id="1.10.150.20">
    <property type="entry name" value="5' to 3' exonuclease, C-terminal subdomain"/>
    <property type="match status" value="1"/>
</dbReference>
<dbReference type="Gene3D" id="2.170.120.12">
    <property type="entry name" value="DNA-directed RNA polymerase, insert domain"/>
    <property type="match status" value="1"/>
</dbReference>
<dbReference type="Gene3D" id="3.30.1360.10">
    <property type="entry name" value="RNA polymerase, RBP11-like subunit"/>
    <property type="match status" value="1"/>
</dbReference>
<dbReference type="HAMAP" id="MF_00059">
    <property type="entry name" value="RNApol_bact_RpoA"/>
    <property type="match status" value="1"/>
</dbReference>
<dbReference type="InterPro" id="IPR011262">
    <property type="entry name" value="DNA-dir_RNA_pol_insert"/>
</dbReference>
<dbReference type="InterPro" id="IPR011263">
    <property type="entry name" value="DNA-dir_RNA_pol_RpoA/D/Rpb3"/>
</dbReference>
<dbReference type="InterPro" id="IPR011773">
    <property type="entry name" value="DNA-dir_RpoA"/>
</dbReference>
<dbReference type="InterPro" id="IPR036603">
    <property type="entry name" value="RBP11-like"/>
</dbReference>
<dbReference type="InterPro" id="IPR011260">
    <property type="entry name" value="RNAP_asu_C"/>
</dbReference>
<dbReference type="InterPro" id="IPR036643">
    <property type="entry name" value="RNApol_insert_sf"/>
</dbReference>
<dbReference type="NCBIfam" id="NF003513">
    <property type="entry name" value="PRK05182.1-2"/>
    <property type="match status" value="1"/>
</dbReference>
<dbReference type="NCBIfam" id="NF003519">
    <property type="entry name" value="PRK05182.2-5"/>
    <property type="match status" value="1"/>
</dbReference>
<dbReference type="NCBIfam" id="TIGR02027">
    <property type="entry name" value="rpoA"/>
    <property type="match status" value="1"/>
</dbReference>
<dbReference type="Pfam" id="PF01000">
    <property type="entry name" value="RNA_pol_A_bac"/>
    <property type="match status" value="1"/>
</dbReference>
<dbReference type="Pfam" id="PF03118">
    <property type="entry name" value="RNA_pol_A_CTD"/>
    <property type="match status" value="1"/>
</dbReference>
<dbReference type="Pfam" id="PF01193">
    <property type="entry name" value="RNA_pol_L"/>
    <property type="match status" value="1"/>
</dbReference>
<dbReference type="SMART" id="SM00662">
    <property type="entry name" value="RPOLD"/>
    <property type="match status" value="1"/>
</dbReference>
<dbReference type="SUPFAM" id="SSF47789">
    <property type="entry name" value="C-terminal domain of RNA polymerase alpha subunit"/>
    <property type="match status" value="1"/>
</dbReference>
<dbReference type="SUPFAM" id="SSF56553">
    <property type="entry name" value="Insert subdomain of RNA polymerase alpha subunit"/>
    <property type="match status" value="1"/>
</dbReference>
<dbReference type="SUPFAM" id="SSF55257">
    <property type="entry name" value="RBP11-like subunits of RNA polymerase"/>
    <property type="match status" value="1"/>
</dbReference>
<reference key="1">
    <citation type="submission" date="2006-12" db="EMBL/GenBank/DDBJ databases">
        <title>Complete sequence of Shewanella amazonensis SB2B.</title>
        <authorList>
            <consortium name="US DOE Joint Genome Institute"/>
            <person name="Copeland A."/>
            <person name="Lucas S."/>
            <person name="Lapidus A."/>
            <person name="Barry K."/>
            <person name="Detter J.C."/>
            <person name="Glavina del Rio T."/>
            <person name="Hammon N."/>
            <person name="Israni S."/>
            <person name="Dalin E."/>
            <person name="Tice H."/>
            <person name="Pitluck S."/>
            <person name="Munk A.C."/>
            <person name="Brettin T."/>
            <person name="Bruce D."/>
            <person name="Han C."/>
            <person name="Tapia R."/>
            <person name="Gilna P."/>
            <person name="Schmutz J."/>
            <person name="Larimer F."/>
            <person name="Land M."/>
            <person name="Hauser L."/>
            <person name="Kyrpides N."/>
            <person name="Mikhailova N."/>
            <person name="Fredrickson J."/>
            <person name="Richardson P."/>
        </authorList>
    </citation>
    <scope>NUCLEOTIDE SEQUENCE [LARGE SCALE GENOMIC DNA]</scope>
    <source>
        <strain>ATCC BAA-1098 / SB2B</strain>
    </source>
</reference>
<protein>
    <recommendedName>
        <fullName evidence="1">DNA-directed RNA polymerase subunit alpha</fullName>
        <shortName evidence="1">RNAP subunit alpha</shortName>
        <ecNumber evidence="1">2.7.7.6</ecNumber>
    </recommendedName>
    <alternativeName>
        <fullName evidence="1">RNA polymerase subunit alpha</fullName>
    </alternativeName>
    <alternativeName>
        <fullName evidence="1">Transcriptase subunit alpha</fullName>
    </alternativeName>
</protein>
<gene>
    <name evidence="1" type="primary">rpoA</name>
    <name type="ordered locus">Sama_0238</name>
</gene>
<organism>
    <name type="scientific">Shewanella amazonensis (strain ATCC BAA-1098 / SB2B)</name>
    <dbReference type="NCBI Taxonomy" id="326297"/>
    <lineage>
        <taxon>Bacteria</taxon>
        <taxon>Pseudomonadati</taxon>
        <taxon>Pseudomonadota</taxon>
        <taxon>Gammaproteobacteria</taxon>
        <taxon>Alteromonadales</taxon>
        <taxon>Shewanellaceae</taxon>
        <taxon>Shewanella</taxon>
    </lineage>
</organism>
<evidence type="ECO:0000255" key="1">
    <source>
        <dbReference type="HAMAP-Rule" id="MF_00059"/>
    </source>
</evidence>
<accession>A1S243</accession>
<feature type="chain" id="PRO_0000296865" description="DNA-directed RNA polymerase subunit alpha">
    <location>
        <begin position="1"/>
        <end position="329"/>
    </location>
</feature>
<feature type="region of interest" description="Alpha N-terminal domain (alpha-NTD)" evidence="1">
    <location>
        <begin position="1"/>
        <end position="234"/>
    </location>
</feature>
<feature type="region of interest" description="Alpha C-terminal domain (alpha-CTD)" evidence="1">
    <location>
        <begin position="248"/>
        <end position="329"/>
    </location>
</feature>
<comment type="function">
    <text evidence="1">DNA-dependent RNA polymerase catalyzes the transcription of DNA into RNA using the four ribonucleoside triphosphates as substrates.</text>
</comment>
<comment type="catalytic activity">
    <reaction evidence="1">
        <text>RNA(n) + a ribonucleoside 5'-triphosphate = RNA(n+1) + diphosphate</text>
        <dbReference type="Rhea" id="RHEA:21248"/>
        <dbReference type="Rhea" id="RHEA-COMP:14527"/>
        <dbReference type="Rhea" id="RHEA-COMP:17342"/>
        <dbReference type="ChEBI" id="CHEBI:33019"/>
        <dbReference type="ChEBI" id="CHEBI:61557"/>
        <dbReference type="ChEBI" id="CHEBI:140395"/>
        <dbReference type="EC" id="2.7.7.6"/>
    </reaction>
</comment>
<comment type="subunit">
    <text evidence="1">Homodimer. The RNAP catalytic core consists of 2 alpha, 1 beta, 1 beta' and 1 omega subunit. When a sigma factor is associated with the core the holoenzyme is formed, which can initiate transcription.</text>
</comment>
<comment type="domain">
    <text evidence="1">The N-terminal domain is essential for RNAP assembly and basal transcription, whereas the C-terminal domain is involved in interaction with transcriptional regulators and with upstream promoter elements.</text>
</comment>
<comment type="similarity">
    <text evidence="1">Belongs to the RNA polymerase alpha chain family.</text>
</comment>
<keyword id="KW-0240">DNA-directed RNA polymerase</keyword>
<keyword id="KW-0548">Nucleotidyltransferase</keyword>
<keyword id="KW-1185">Reference proteome</keyword>
<keyword id="KW-0804">Transcription</keyword>
<keyword id="KW-0808">Transferase</keyword>
<proteinExistence type="inferred from homology"/>